<gene>
    <name type="primary">MT-CYB</name>
    <name type="synonym">COB</name>
    <name type="synonym">CYTB</name>
    <name type="synonym">MTCYB</name>
</gene>
<sequence>QILTGLFLAMHYTSDTMTAFSSVTHICRDVNYGWLIRYLHANGASMFFICLFLHVGRGLYYGSYMFLETWNIGVLLLFAVMATAFMGYVLPWGQMSFWGATVITNLLSAIPYIGSDLVEWIWGGFSVDKATLTRFFAFHFILPFIIAALAGVHLLFLHETGSNNPSGLCSDADKIPFHPYYTIKDILGVLLLILVLTSLVLFSPDLLGDPDNYTPVNPLNTPPHIKPEWYFLFAYAILRSIPNKLGGVLALVLSILVLAFIPFLHTSKQRSMMFRPFSQCLFWILVADLLTLTWIGGQPVEHPFIIIGQLASILYFLLILVLMPITSLFENNLLKW</sequence>
<dbReference type="EMBL" id="AJ000452">
    <property type="protein sequence ID" value="CAA04096.1"/>
    <property type="molecule type" value="Genomic_DNA"/>
</dbReference>
<dbReference type="SMR" id="O79461"/>
<dbReference type="GO" id="GO:0005743">
    <property type="term" value="C:mitochondrial inner membrane"/>
    <property type="evidence" value="ECO:0007669"/>
    <property type="project" value="UniProtKB-SubCell"/>
</dbReference>
<dbReference type="GO" id="GO:0045275">
    <property type="term" value="C:respiratory chain complex III"/>
    <property type="evidence" value="ECO:0007669"/>
    <property type="project" value="InterPro"/>
</dbReference>
<dbReference type="GO" id="GO:0046872">
    <property type="term" value="F:metal ion binding"/>
    <property type="evidence" value="ECO:0007669"/>
    <property type="project" value="UniProtKB-KW"/>
</dbReference>
<dbReference type="GO" id="GO:0008121">
    <property type="term" value="F:ubiquinol-cytochrome-c reductase activity"/>
    <property type="evidence" value="ECO:0007669"/>
    <property type="project" value="InterPro"/>
</dbReference>
<dbReference type="GO" id="GO:0006122">
    <property type="term" value="P:mitochondrial electron transport, ubiquinol to cytochrome c"/>
    <property type="evidence" value="ECO:0007669"/>
    <property type="project" value="TreeGrafter"/>
</dbReference>
<dbReference type="CDD" id="cd00290">
    <property type="entry name" value="cytochrome_b_C"/>
    <property type="match status" value="1"/>
</dbReference>
<dbReference type="CDD" id="cd00284">
    <property type="entry name" value="Cytochrome_b_N"/>
    <property type="match status" value="1"/>
</dbReference>
<dbReference type="FunFam" id="1.20.810.10:FF:000002">
    <property type="entry name" value="Cytochrome b"/>
    <property type="match status" value="1"/>
</dbReference>
<dbReference type="Gene3D" id="1.20.810.10">
    <property type="entry name" value="Cytochrome Bc1 Complex, Chain C"/>
    <property type="match status" value="1"/>
</dbReference>
<dbReference type="InterPro" id="IPR005798">
    <property type="entry name" value="Cyt_b/b6_C"/>
</dbReference>
<dbReference type="InterPro" id="IPR036150">
    <property type="entry name" value="Cyt_b/b6_C_sf"/>
</dbReference>
<dbReference type="InterPro" id="IPR005797">
    <property type="entry name" value="Cyt_b/b6_N"/>
</dbReference>
<dbReference type="InterPro" id="IPR027387">
    <property type="entry name" value="Cytb/b6-like_sf"/>
</dbReference>
<dbReference type="InterPro" id="IPR030689">
    <property type="entry name" value="Cytochrome_b"/>
</dbReference>
<dbReference type="InterPro" id="IPR048260">
    <property type="entry name" value="Cytochrome_b_C_euk/bac"/>
</dbReference>
<dbReference type="InterPro" id="IPR048259">
    <property type="entry name" value="Cytochrome_b_N_euk/bac"/>
</dbReference>
<dbReference type="InterPro" id="IPR016174">
    <property type="entry name" value="Di-haem_cyt_TM"/>
</dbReference>
<dbReference type="PANTHER" id="PTHR19271">
    <property type="entry name" value="CYTOCHROME B"/>
    <property type="match status" value="1"/>
</dbReference>
<dbReference type="PANTHER" id="PTHR19271:SF16">
    <property type="entry name" value="CYTOCHROME B"/>
    <property type="match status" value="1"/>
</dbReference>
<dbReference type="Pfam" id="PF00032">
    <property type="entry name" value="Cytochrom_B_C"/>
    <property type="match status" value="1"/>
</dbReference>
<dbReference type="Pfam" id="PF00033">
    <property type="entry name" value="Cytochrome_B"/>
    <property type="match status" value="1"/>
</dbReference>
<dbReference type="PIRSF" id="PIRSF038885">
    <property type="entry name" value="COB"/>
    <property type="match status" value="1"/>
</dbReference>
<dbReference type="SUPFAM" id="SSF81648">
    <property type="entry name" value="a domain/subunit of cytochrome bc1 complex (Ubiquinol-cytochrome c reductase)"/>
    <property type="match status" value="1"/>
</dbReference>
<dbReference type="SUPFAM" id="SSF81342">
    <property type="entry name" value="Transmembrane di-heme cytochromes"/>
    <property type="match status" value="1"/>
</dbReference>
<dbReference type="PROSITE" id="PS51003">
    <property type="entry name" value="CYTB_CTER"/>
    <property type="match status" value="1"/>
</dbReference>
<dbReference type="PROSITE" id="PS51002">
    <property type="entry name" value="CYTB_NTER"/>
    <property type="match status" value="1"/>
</dbReference>
<proteinExistence type="inferred from homology"/>
<reference key="1">
    <citation type="journal article" date="1999" name="Mol. Phylogenet. Evol.">
        <title>Molecular phylogeny and evolution of Sorex shrews (Soricidae: Insectivora) inferred from mitochondrial DNA sequence data.</title>
        <authorList>
            <person name="Fumagalli L."/>
            <person name="Taberlet P."/>
            <person name="Stewart D.T."/>
            <person name="Gielly L."/>
            <person name="Hausser J."/>
            <person name="Vogel P."/>
        </authorList>
    </citation>
    <scope>NUCLEOTIDE SEQUENCE [GENOMIC DNA]</scope>
</reference>
<geneLocation type="mitochondrion"/>
<comment type="function">
    <text evidence="2">Component of the ubiquinol-cytochrome c reductase complex (complex III or cytochrome b-c1 complex) that is part of the mitochondrial respiratory chain. The b-c1 complex mediates electron transfer from ubiquinol to cytochrome c. Contributes to the generation of a proton gradient across the mitochondrial membrane that is then used for ATP synthesis.</text>
</comment>
<comment type="cofactor">
    <cofactor evidence="2">
        <name>heme b</name>
        <dbReference type="ChEBI" id="CHEBI:60344"/>
    </cofactor>
    <text evidence="2">Binds 2 heme b groups non-covalently.</text>
</comment>
<comment type="subunit">
    <text evidence="2">The cytochrome bc1 complex contains 11 subunits: 3 respiratory subunits (MT-CYB, CYC1 and UQCRFS1), 2 core proteins (UQCRC1 and UQCRC2) and 6 low-molecular weight proteins (UQCRH/QCR6, UQCRB/QCR7, UQCRQ/QCR8, UQCR10/QCR9, UQCR11/QCR10 and a cleavage product of UQCRFS1). This cytochrome bc1 complex then forms a dimer.</text>
</comment>
<comment type="subcellular location">
    <subcellularLocation>
        <location evidence="2">Mitochondrion inner membrane</location>
        <topology evidence="2">Multi-pass membrane protein</topology>
    </subcellularLocation>
</comment>
<comment type="miscellaneous">
    <text evidence="1">Heme 1 (or BL or b562) is low-potential and absorbs at about 562 nm, and heme 2 (or BH or b566) is high-potential and absorbs at about 566 nm.</text>
</comment>
<comment type="similarity">
    <text evidence="3 4">Belongs to the cytochrome b family.</text>
</comment>
<comment type="caution">
    <text evidence="2">The full-length protein contains only eight transmembrane helices, not nine as predicted by bioinformatics tools.</text>
</comment>
<feature type="chain" id="PRO_0000061574" description="Cytochrome b">
    <location>
        <begin position="1" status="less than"/>
        <end position="336" status="greater than"/>
    </location>
</feature>
<feature type="transmembrane region" description="Helical" evidence="2">
    <location>
        <begin position="1" status="less than"/>
        <end position="10"/>
    </location>
</feature>
<feature type="transmembrane region" description="Helical" evidence="2">
    <location>
        <begin position="34"/>
        <end position="55"/>
    </location>
</feature>
<feature type="transmembrane region" description="Helical" evidence="2">
    <location>
        <begin position="70"/>
        <end position="90"/>
    </location>
</feature>
<feature type="transmembrane region" description="Helical" evidence="2">
    <location>
        <begin position="135"/>
        <end position="155"/>
    </location>
</feature>
<feature type="transmembrane region" description="Helical" evidence="2">
    <location>
        <begin position="183"/>
        <end position="203"/>
    </location>
</feature>
<feature type="transmembrane region" description="Helical" evidence="2">
    <location>
        <begin position="245"/>
        <end position="265"/>
    </location>
</feature>
<feature type="transmembrane region" description="Helical" evidence="2">
    <location>
        <begin position="277"/>
        <end position="297"/>
    </location>
</feature>
<feature type="transmembrane region" description="Helical" evidence="2">
    <location>
        <begin position="304"/>
        <end position="324"/>
    </location>
</feature>
<feature type="binding site" description="axial binding residue" evidence="2">
    <location>
        <position position="40"/>
    </location>
    <ligand>
        <name>heme b</name>
        <dbReference type="ChEBI" id="CHEBI:60344"/>
        <label>b562</label>
    </ligand>
    <ligandPart>
        <name>Fe</name>
        <dbReference type="ChEBI" id="CHEBI:18248"/>
    </ligandPart>
</feature>
<feature type="binding site" description="axial binding residue" evidence="2">
    <location>
        <position position="54"/>
    </location>
    <ligand>
        <name>heme b</name>
        <dbReference type="ChEBI" id="CHEBI:60344"/>
        <label>b566</label>
    </ligand>
    <ligandPart>
        <name>Fe</name>
        <dbReference type="ChEBI" id="CHEBI:18248"/>
    </ligandPart>
</feature>
<feature type="binding site" description="axial binding residue" evidence="2">
    <location>
        <position position="139"/>
    </location>
    <ligand>
        <name>heme b</name>
        <dbReference type="ChEBI" id="CHEBI:60344"/>
        <label>b562</label>
    </ligand>
    <ligandPart>
        <name>Fe</name>
        <dbReference type="ChEBI" id="CHEBI:18248"/>
    </ligandPart>
</feature>
<feature type="binding site" description="axial binding residue" evidence="2">
    <location>
        <position position="153"/>
    </location>
    <ligand>
        <name>heme b</name>
        <dbReference type="ChEBI" id="CHEBI:60344"/>
        <label>b566</label>
    </ligand>
    <ligandPart>
        <name>Fe</name>
        <dbReference type="ChEBI" id="CHEBI:18248"/>
    </ligandPart>
</feature>
<feature type="binding site" evidence="2">
    <location>
        <position position="158"/>
    </location>
    <ligand>
        <name>a ubiquinone</name>
        <dbReference type="ChEBI" id="CHEBI:16389"/>
    </ligand>
</feature>
<feature type="non-terminal residue">
    <location>
        <position position="1"/>
    </location>
</feature>
<feature type="non-terminal residue">
    <location>
        <position position="336"/>
    </location>
</feature>
<accession>O79461</accession>
<keyword id="KW-0249">Electron transport</keyword>
<keyword id="KW-0349">Heme</keyword>
<keyword id="KW-0408">Iron</keyword>
<keyword id="KW-0472">Membrane</keyword>
<keyword id="KW-0479">Metal-binding</keyword>
<keyword id="KW-0496">Mitochondrion</keyword>
<keyword id="KW-0999">Mitochondrion inner membrane</keyword>
<keyword id="KW-0679">Respiratory chain</keyword>
<keyword id="KW-0812">Transmembrane</keyword>
<keyword id="KW-1133">Transmembrane helix</keyword>
<keyword id="KW-0813">Transport</keyword>
<keyword id="KW-0830">Ubiquinone</keyword>
<name>CYB_SORPC</name>
<evidence type="ECO:0000250" key="1"/>
<evidence type="ECO:0000250" key="2">
    <source>
        <dbReference type="UniProtKB" id="P00157"/>
    </source>
</evidence>
<evidence type="ECO:0000255" key="3">
    <source>
        <dbReference type="PROSITE-ProRule" id="PRU00967"/>
    </source>
</evidence>
<evidence type="ECO:0000255" key="4">
    <source>
        <dbReference type="PROSITE-ProRule" id="PRU00968"/>
    </source>
</evidence>
<organism>
    <name type="scientific">Sorex pacificus</name>
    <name type="common">Pacific shrew</name>
    <dbReference type="NCBI Taxonomy" id="62904"/>
    <lineage>
        <taxon>Eukaryota</taxon>
        <taxon>Metazoa</taxon>
        <taxon>Chordata</taxon>
        <taxon>Craniata</taxon>
        <taxon>Vertebrata</taxon>
        <taxon>Euteleostomi</taxon>
        <taxon>Mammalia</taxon>
        <taxon>Eutheria</taxon>
        <taxon>Laurasiatheria</taxon>
        <taxon>Eulipotyphla</taxon>
        <taxon>Soricidae</taxon>
        <taxon>Soricinae</taxon>
        <taxon>Sorex</taxon>
    </lineage>
</organism>
<protein>
    <recommendedName>
        <fullName>Cytochrome b</fullName>
    </recommendedName>
    <alternativeName>
        <fullName>Complex III subunit 3</fullName>
    </alternativeName>
    <alternativeName>
        <fullName>Complex III subunit III</fullName>
    </alternativeName>
    <alternativeName>
        <fullName>Cytochrome b-c1 complex subunit 3</fullName>
    </alternativeName>
    <alternativeName>
        <fullName>Ubiquinol-cytochrome-c reductase complex cytochrome b subunit</fullName>
    </alternativeName>
</protein>